<name>IL17B_MESAU</name>
<proteinExistence type="evidence at transcript level"/>
<keyword id="KW-0202">Cytokine</keyword>
<keyword id="KW-1015">Disulfide bond</keyword>
<keyword id="KW-0325">Glycoprotein</keyword>
<keyword id="KW-1185">Reference proteome</keyword>
<keyword id="KW-0964">Secreted</keyword>
<keyword id="KW-0732">Signal</keyword>
<reference key="1">
    <citation type="journal article" date="2002" name="Neuromuscul. Disord.">
        <title>Expression of IL-17B in neurons and evaluation of its possible role in the chromosome 5q-linked form of Charcot-Marie-Tooth disease.</title>
        <authorList>
            <person name="Moore E.E."/>
            <person name="Presnell S."/>
            <person name="Garrigues U."/>
            <person name="Guilbot A."/>
            <person name="LeGuern E."/>
            <person name="Smith D."/>
            <person name="Yao L."/>
            <person name="Whitmore T.E."/>
            <person name="Gilbert T."/>
            <person name="Palmer T.D."/>
            <person name="Horner P.J."/>
            <person name="Kuestner R.E."/>
        </authorList>
    </citation>
    <scope>NUCLEOTIDE SEQUENCE [MRNA]</scope>
</reference>
<organism>
    <name type="scientific">Mesocricetus auratus</name>
    <name type="common">Golden hamster</name>
    <dbReference type="NCBI Taxonomy" id="10036"/>
    <lineage>
        <taxon>Eukaryota</taxon>
        <taxon>Metazoa</taxon>
        <taxon>Chordata</taxon>
        <taxon>Craniata</taxon>
        <taxon>Vertebrata</taxon>
        <taxon>Euteleostomi</taxon>
        <taxon>Mammalia</taxon>
        <taxon>Eutheria</taxon>
        <taxon>Euarchontoglires</taxon>
        <taxon>Glires</taxon>
        <taxon>Rodentia</taxon>
        <taxon>Myomorpha</taxon>
        <taxon>Muroidea</taxon>
        <taxon>Cricetidae</taxon>
        <taxon>Cricetinae</taxon>
        <taxon>Mesocricetus</taxon>
    </lineage>
</organism>
<comment type="function">
    <text evidence="1">Stimulates the release of tumor necrosis factor alpha and IL-1-beta from the monocytic cell line THP-1.</text>
</comment>
<comment type="subcellular location">
    <subcellularLocation>
        <location>Secreted</location>
    </subcellularLocation>
</comment>
<comment type="similarity">
    <text evidence="4">Belongs to the IL-17 family.</text>
</comment>
<sequence length="178" mass="20071">MDWPHSLLFLLAISIFLGPSQPRNTKGKRKGQVRPGPLAPGPHQVPLDLVSRVKPYARMEEYERNLGEMVAQLRNSSEPAKRRCEVNLQLWLSNKRSLSPWGYSINHDPSRIPADLPEARCLCLGCVNPFTMQEDRSMVSVPVFSQVPVRRRLCPPPPRPGPCRHRVVMETIAVGCTC</sequence>
<feature type="signal peptide" evidence="2">
    <location>
        <begin position="1"/>
        <end position="22"/>
    </location>
</feature>
<feature type="chain" id="PRO_0000015427" description="Interleukin-17B">
    <location>
        <begin position="23"/>
        <end position="178" status="greater than"/>
    </location>
</feature>
<feature type="region of interest" description="Disordered" evidence="3">
    <location>
        <begin position="21"/>
        <end position="44"/>
    </location>
</feature>
<feature type="glycosylation site" description="N-linked (GlcNAc...) asparagine" evidence="2">
    <location>
        <position position="75"/>
    </location>
</feature>
<feature type="disulfide bond" evidence="1">
    <location>
        <begin position="121"/>
        <end position="176"/>
    </location>
</feature>
<feature type="disulfide bond" evidence="1">
    <location>
        <begin position="126"/>
        <end position="178"/>
    </location>
</feature>
<feature type="non-terminal residue">
    <location>
        <position position="178"/>
    </location>
</feature>
<dbReference type="EMBL" id="AF218725">
    <property type="protein sequence ID" value="AAG44134.1"/>
    <property type="molecule type" value="mRNA"/>
</dbReference>
<dbReference type="SMR" id="Q9EQI6"/>
<dbReference type="STRING" id="10036.ENSMAUP00000016594"/>
<dbReference type="GlyCosmos" id="Q9EQI6">
    <property type="glycosylation" value="1 site, No reported glycans"/>
</dbReference>
<dbReference type="eggNOG" id="ENOG502S074">
    <property type="taxonomic scope" value="Eukaryota"/>
</dbReference>
<dbReference type="Proteomes" id="UP000189706">
    <property type="component" value="Unplaced"/>
</dbReference>
<dbReference type="GO" id="GO:0005615">
    <property type="term" value="C:extracellular space"/>
    <property type="evidence" value="ECO:0007669"/>
    <property type="project" value="UniProtKB-KW"/>
</dbReference>
<dbReference type="GO" id="GO:0005125">
    <property type="term" value="F:cytokine activity"/>
    <property type="evidence" value="ECO:0007669"/>
    <property type="project" value="UniProtKB-KW"/>
</dbReference>
<dbReference type="GO" id="GO:0006954">
    <property type="term" value="P:inflammatory response"/>
    <property type="evidence" value="ECO:0007669"/>
    <property type="project" value="InterPro"/>
</dbReference>
<dbReference type="FunFam" id="2.10.90.10:FF:000034">
    <property type="entry name" value="Interleukin 17B"/>
    <property type="match status" value="1"/>
</dbReference>
<dbReference type="Gene3D" id="2.10.90.10">
    <property type="entry name" value="Cystine-knot cytokines"/>
    <property type="match status" value="1"/>
</dbReference>
<dbReference type="InterPro" id="IPR029034">
    <property type="entry name" value="Cystine-knot_cytokine"/>
</dbReference>
<dbReference type="InterPro" id="IPR020440">
    <property type="entry name" value="IL-17_chr"/>
</dbReference>
<dbReference type="InterPro" id="IPR010345">
    <property type="entry name" value="IL-17_fam"/>
</dbReference>
<dbReference type="Pfam" id="PF06083">
    <property type="entry name" value="IL17"/>
    <property type="match status" value="1"/>
</dbReference>
<dbReference type="PRINTS" id="PR01932">
    <property type="entry name" value="INTRLEUKIN17"/>
</dbReference>
<dbReference type="SUPFAM" id="SSF57501">
    <property type="entry name" value="Cystine-knot cytokines"/>
    <property type="match status" value="1"/>
</dbReference>
<gene>
    <name type="primary">IL17B</name>
    <name type="synonym">NIRF</name>
</gene>
<protein>
    <recommendedName>
        <fullName>Interleukin-17B</fullName>
        <shortName>IL-17B</shortName>
    </recommendedName>
    <alternativeName>
        <fullName>Neuronal interleukin-17-related factor</fullName>
    </alternativeName>
</protein>
<evidence type="ECO:0000250" key="1"/>
<evidence type="ECO:0000255" key="2"/>
<evidence type="ECO:0000256" key="3">
    <source>
        <dbReference type="SAM" id="MobiDB-lite"/>
    </source>
</evidence>
<evidence type="ECO:0000305" key="4"/>
<accession>Q9EQI6</accession>